<proteinExistence type="inferred from homology"/>
<comment type="catalytic activity">
    <reaction evidence="1">
        <text>tRNA(Gly) + glycine + ATP = glycyl-tRNA(Gly) + AMP + diphosphate</text>
        <dbReference type="Rhea" id="RHEA:16013"/>
        <dbReference type="Rhea" id="RHEA-COMP:9664"/>
        <dbReference type="Rhea" id="RHEA-COMP:9683"/>
        <dbReference type="ChEBI" id="CHEBI:30616"/>
        <dbReference type="ChEBI" id="CHEBI:33019"/>
        <dbReference type="ChEBI" id="CHEBI:57305"/>
        <dbReference type="ChEBI" id="CHEBI:78442"/>
        <dbReference type="ChEBI" id="CHEBI:78522"/>
        <dbReference type="ChEBI" id="CHEBI:456215"/>
        <dbReference type="EC" id="6.1.1.14"/>
    </reaction>
</comment>
<comment type="subunit">
    <text evidence="1">Tetramer of two alpha and two beta subunits.</text>
</comment>
<comment type="subcellular location">
    <subcellularLocation>
        <location evidence="1">Cytoplasm</location>
    </subcellularLocation>
</comment>
<comment type="similarity">
    <text evidence="1">Belongs to the class-II aminoacyl-tRNA synthetase family.</text>
</comment>
<gene>
    <name evidence="1" type="primary">glyQ</name>
    <name type="ordered locus">SAG0268</name>
</gene>
<organism>
    <name type="scientific">Streptococcus agalactiae serotype V (strain ATCC BAA-611 / 2603 V/R)</name>
    <dbReference type="NCBI Taxonomy" id="208435"/>
    <lineage>
        <taxon>Bacteria</taxon>
        <taxon>Bacillati</taxon>
        <taxon>Bacillota</taxon>
        <taxon>Bacilli</taxon>
        <taxon>Lactobacillales</taxon>
        <taxon>Streptococcaceae</taxon>
        <taxon>Streptococcus</taxon>
    </lineage>
</organism>
<reference key="1">
    <citation type="journal article" date="2002" name="Proc. Natl. Acad. Sci. U.S.A.">
        <title>Complete genome sequence and comparative genomic analysis of an emerging human pathogen, serotype V Streptococcus agalactiae.</title>
        <authorList>
            <person name="Tettelin H."/>
            <person name="Masignani V."/>
            <person name="Cieslewicz M.J."/>
            <person name="Eisen J.A."/>
            <person name="Peterson S.N."/>
            <person name="Wessels M.R."/>
            <person name="Paulsen I.T."/>
            <person name="Nelson K.E."/>
            <person name="Margarit I."/>
            <person name="Read T.D."/>
            <person name="Madoff L.C."/>
            <person name="Wolf A.M."/>
            <person name="Beanan M.J."/>
            <person name="Brinkac L.M."/>
            <person name="Daugherty S.C."/>
            <person name="DeBoy R.T."/>
            <person name="Durkin A.S."/>
            <person name="Kolonay J.F."/>
            <person name="Madupu R."/>
            <person name="Lewis M.R."/>
            <person name="Radune D."/>
            <person name="Fedorova N.B."/>
            <person name="Scanlan D."/>
            <person name="Khouri H.M."/>
            <person name="Mulligan S."/>
            <person name="Carty H.A."/>
            <person name="Cline R.T."/>
            <person name="Van Aken S.E."/>
            <person name="Gill J."/>
            <person name="Scarselli M."/>
            <person name="Mora M."/>
            <person name="Iacobini E.T."/>
            <person name="Brettoni C."/>
            <person name="Galli G."/>
            <person name="Mariani M."/>
            <person name="Vegni F."/>
            <person name="Maione D."/>
            <person name="Rinaudo D."/>
            <person name="Rappuoli R."/>
            <person name="Telford J.L."/>
            <person name="Kasper D.L."/>
            <person name="Grandi G."/>
            <person name="Fraser C.M."/>
        </authorList>
    </citation>
    <scope>NUCLEOTIDE SEQUENCE [LARGE SCALE GENOMIC DNA]</scope>
    <source>
        <strain>ATCC BAA-611 / 2603 V/R</strain>
    </source>
</reference>
<feature type="chain" id="PRO_0000072867" description="Glycine--tRNA ligase alpha subunit">
    <location>
        <begin position="1"/>
        <end position="304"/>
    </location>
</feature>
<dbReference type="EC" id="6.1.1.14" evidence="1"/>
<dbReference type="EMBL" id="AE009948">
    <property type="protein sequence ID" value="AAM99175.1"/>
    <property type="molecule type" value="Genomic_DNA"/>
</dbReference>
<dbReference type="RefSeq" id="NP_687303.1">
    <property type="nucleotide sequence ID" value="NC_004116.1"/>
</dbReference>
<dbReference type="RefSeq" id="WP_000038755.1">
    <property type="nucleotide sequence ID" value="NC_004116.1"/>
</dbReference>
<dbReference type="SMR" id="Q8E1T5"/>
<dbReference type="STRING" id="208435.SAG0268"/>
<dbReference type="GeneID" id="66885241"/>
<dbReference type="KEGG" id="sag:SAG0268"/>
<dbReference type="PATRIC" id="fig|208435.3.peg.266"/>
<dbReference type="HOGENOM" id="CLU_057066_1_0_9"/>
<dbReference type="OrthoDB" id="9802183at2"/>
<dbReference type="Proteomes" id="UP000000821">
    <property type="component" value="Chromosome"/>
</dbReference>
<dbReference type="GO" id="GO:0005829">
    <property type="term" value="C:cytosol"/>
    <property type="evidence" value="ECO:0007669"/>
    <property type="project" value="TreeGrafter"/>
</dbReference>
<dbReference type="GO" id="GO:0005524">
    <property type="term" value="F:ATP binding"/>
    <property type="evidence" value="ECO:0007669"/>
    <property type="project" value="UniProtKB-UniRule"/>
</dbReference>
<dbReference type="GO" id="GO:0140096">
    <property type="term" value="F:catalytic activity, acting on a protein"/>
    <property type="evidence" value="ECO:0007669"/>
    <property type="project" value="UniProtKB-ARBA"/>
</dbReference>
<dbReference type="GO" id="GO:0004820">
    <property type="term" value="F:glycine-tRNA ligase activity"/>
    <property type="evidence" value="ECO:0007669"/>
    <property type="project" value="UniProtKB-UniRule"/>
</dbReference>
<dbReference type="GO" id="GO:0016740">
    <property type="term" value="F:transferase activity"/>
    <property type="evidence" value="ECO:0007669"/>
    <property type="project" value="UniProtKB-ARBA"/>
</dbReference>
<dbReference type="GO" id="GO:0006426">
    <property type="term" value="P:glycyl-tRNA aminoacylation"/>
    <property type="evidence" value="ECO:0007669"/>
    <property type="project" value="UniProtKB-UniRule"/>
</dbReference>
<dbReference type="CDD" id="cd00733">
    <property type="entry name" value="GlyRS_alpha_core"/>
    <property type="match status" value="1"/>
</dbReference>
<dbReference type="FunFam" id="3.30.930.10:FF:000006">
    <property type="entry name" value="Glycine--tRNA ligase alpha subunit"/>
    <property type="match status" value="1"/>
</dbReference>
<dbReference type="Gene3D" id="3.30.930.10">
    <property type="entry name" value="Bira Bifunctional Protein, Domain 2"/>
    <property type="match status" value="1"/>
</dbReference>
<dbReference type="Gene3D" id="1.20.58.180">
    <property type="entry name" value="Class II aaRS and biotin synthetases, domain 2"/>
    <property type="match status" value="1"/>
</dbReference>
<dbReference type="HAMAP" id="MF_00254">
    <property type="entry name" value="Gly_tRNA_synth_alpha"/>
    <property type="match status" value="1"/>
</dbReference>
<dbReference type="InterPro" id="IPR045864">
    <property type="entry name" value="aa-tRNA-synth_II/BPL/LPL"/>
</dbReference>
<dbReference type="InterPro" id="IPR006194">
    <property type="entry name" value="Gly-tRNA-synth_heterodimer"/>
</dbReference>
<dbReference type="InterPro" id="IPR002310">
    <property type="entry name" value="Gly-tRNA_ligase_asu"/>
</dbReference>
<dbReference type="NCBIfam" id="TIGR00388">
    <property type="entry name" value="glyQ"/>
    <property type="match status" value="1"/>
</dbReference>
<dbReference type="NCBIfam" id="NF006827">
    <property type="entry name" value="PRK09348.1"/>
    <property type="match status" value="1"/>
</dbReference>
<dbReference type="PANTHER" id="PTHR30075:SF2">
    <property type="entry name" value="GLYCINE--TRNA LIGASE, CHLOROPLASTIC_MITOCHONDRIAL 2"/>
    <property type="match status" value="1"/>
</dbReference>
<dbReference type="PANTHER" id="PTHR30075">
    <property type="entry name" value="GLYCYL-TRNA SYNTHETASE"/>
    <property type="match status" value="1"/>
</dbReference>
<dbReference type="Pfam" id="PF02091">
    <property type="entry name" value="tRNA-synt_2e"/>
    <property type="match status" value="1"/>
</dbReference>
<dbReference type="PRINTS" id="PR01044">
    <property type="entry name" value="TRNASYNTHGA"/>
</dbReference>
<dbReference type="SUPFAM" id="SSF55681">
    <property type="entry name" value="Class II aaRS and biotin synthetases"/>
    <property type="match status" value="1"/>
</dbReference>
<dbReference type="PROSITE" id="PS50861">
    <property type="entry name" value="AA_TRNA_LIGASE_II_GLYAB"/>
    <property type="match status" value="1"/>
</dbReference>
<accession>Q8E1T5</accession>
<keyword id="KW-0030">Aminoacyl-tRNA synthetase</keyword>
<keyword id="KW-0067">ATP-binding</keyword>
<keyword id="KW-0963">Cytoplasm</keyword>
<keyword id="KW-0436">Ligase</keyword>
<keyword id="KW-0547">Nucleotide-binding</keyword>
<keyword id="KW-0648">Protein biosynthesis</keyword>
<keyword id="KW-1185">Reference proteome</keyword>
<evidence type="ECO:0000255" key="1">
    <source>
        <dbReference type="HAMAP-Rule" id="MF_00254"/>
    </source>
</evidence>
<name>SYGA_STRA5</name>
<protein>
    <recommendedName>
        <fullName evidence="1">Glycine--tRNA ligase alpha subunit</fullName>
        <ecNumber evidence="1">6.1.1.14</ecNumber>
    </recommendedName>
    <alternativeName>
        <fullName evidence="1">Glycyl-tRNA synthetase alpha subunit</fullName>
        <shortName evidence="1">GlyRS</shortName>
    </alternativeName>
</protein>
<sequence>MSKKLTFQEIILTLQQFWNDQGCMLMQAYDNEKGAGTMSPYTFLRAIGPEPWNAAYVEPSRRPADGRYGENPNRLYQHHQFQVVMKPSPSNIQELYLKSLELLGINPLEHDIRFVEDNWENPSTGSAGLGWEVWLDGMEITQFTYFQQVGGLQTGPVTSEVTYGLERLASYIQEVDSVYDIEWAPGVKYGEIFTQPEYEHSKYSFEISDQVMLLENFEKFEREAKRALEEGLVHPAYDYVLKCSHTFNLLDARGAVSVTERAGYIARIRNLARVVAKTFVAERKKLGFPLLDEETRIKLLAEED</sequence>